<proteinExistence type="inferred from homology"/>
<accession>Q8P8P4</accession>
<name>KCY_XANCP</name>
<sequence length="226" mass="24078">MTDLSPVLTIDGPSGAGKGTVSRIVAARLGWHYLDSGALYRAVGVAASWADLDVSDPAALVRCAFDTKVEFDEAGEAGLRVLVNGVDATSELRLETTGALASAIAAIPEVRSALKERQRAFRQPPGLVADGRDMGTVIFPDAAFKVFLTASAEERAGRRHKQLMEKGVSVIFDDLLREIMARDARDAQRVVAPLRPAEDAVLIDTSGIGIEDVVQRVVGLLDSRTP</sequence>
<reference key="1">
    <citation type="journal article" date="2002" name="Nature">
        <title>Comparison of the genomes of two Xanthomonas pathogens with differing host specificities.</title>
        <authorList>
            <person name="da Silva A.C.R."/>
            <person name="Ferro J.A."/>
            <person name="Reinach F.C."/>
            <person name="Farah C.S."/>
            <person name="Furlan L.R."/>
            <person name="Quaggio R.B."/>
            <person name="Monteiro-Vitorello C.B."/>
            <person name="Van Sluys M.A."/>
            <person name="Almeida N.F. Jr."/>
            <person name="Alves L.M.C."/>
            <person name="do Amaral A.M."/>
            <person name="Bertolini M.C."/>
            <person name="Camargo L.E.A."/>
            <person name="Camarotte G."/>
            <person name="Cannavan F."/>
            <person name="Cardozo J."/>
            <person name="Chambergo F."/>
            <person name="Ciapina L.P."/>
            <person name="Cicarelli R.M.B."/>
            <person name="Coutinho L.L."/>
            <person name="Cursino-Santos J.R."/>
            <person name="El-Dorry H."/>
            <person name="Faria J.B."/>
            <person name="Ferreira A.J.S."/>
            <person name="Ferreira R.C.C."/>
            <person name="Ferro M.I.T."/>
            <person name="Formighieri E.F."/>
            <person name="Franco M.C."/>
            <person name="Greggio C.C."/>
            <person name="Gruber A."/>
            <person name="Katsuyama A.M."/>
            <person name="Kishi L.T."/>
            <person name="Leite R.P."/>
            <person name="Lemos E.G.M."/>
            <person name="Lemos M.V.F."/>
            <person name="Locali E.C."/>
            <person name="Machado M.A."/>
            <person name="Madeira A.M.B.N."/>
            <person name="Martinez-Rossi N.M."/>
            <person name="Martins E.C."/>
            <person name="Meidanis J."/>
            <person name="Menck C.F.M."/>
            <person name="Miyaki C.Y."/>
            <person name="Moon D.H."/>
            <person name="Moreira L.M."/>
            <person name="Novo M.T.M."/>
            <person name="Okura V.K."/>
            <person name="Oliveira M.C."/>
            <person name="Oliveira V.R."/>
            <person name="Pereira H.A."/>
            <person name="Rossi A."/>
            <person name="Sena J.A.D."/>
            <person name="Silva C."/>
            <person name="de Souza R.F."/>
            <person name="Spinola L.A.F."/>
            <person name="Takita M.A."/>
            <person name="Tamura R.E."/>
            <person name="Teixeira E.C."/>
            <person name="Tezza R.I.D."/>
            <person name="Trindade dos Santos M."/>
            <person name="Truffi D."/>
            <person name="Tsai S.M."/>
            <person name="White F.F."/>
            <person name="Setubal J.C."/>
            <person name="Kitajima J.P."/>
        </authorList>
    </citation>
    <scope>NUCLEOTIDE SEQUENCE [LARGE SCALE GENOMIC DNA]</scope>
    <source>
        <strain>ATCC 33913 / DSM 3586 / NCPPB 528 / LMG 568 / P 25</strain>
    </source>
</reference>
<gene>
    <name evidence="1" type="primary">cmk</name>
    <name type="ordered locus">XCC2195</name>
</gene>
<protein>
    <recommendedName>
        <fullName evidence="1">Cytidylate kinase</fullName>
        <shortName evidence="1">CK</shortName>
        <ecNumber evidence="1">2.7.4.25</ecNumber>
    </recommendedName>
    <alternativeName>
        <fullName evidence="1">Cytidine monophosphate kinase</fullName>
        <shortName evidence="1">CMP kinase</shortName>
    </alternativeName>
</protein>
<feature type="chain" id="PRO_0000132003" description="Cytidylate kinase">
    <location>
        <begin position="1"/>
        <end position="226"/>
    </location>
</feature>
<feature type="binding site" evidence="1">
    <location>
        <begin position="12"/>
        <end position="20"/>
    </location>
    <ligand>
        <name>ATP</name>
        <dbReference type="ChEBI" id="CHEBI:30616"/>
    </ligand>
</feature>
<evidence type="ECO:0000255" key="1">
    <source>
        <dbReference type="HAMAP-Rule" id="MF_00238"/>
    </source>
</evidence>
<dbReference type="EC" id="2.7.4.25" evidence="1"/>
<dbReference type="EMBL" id="AE008922">
    <property type="protein sequence ID" value="AAM41475.1"/>
    <property type="molecule type" value="Genomic_DNA"/>
</dbReference>
<dbReference type="RefSeq" id="NP_637551.1">
    <property type="nucleotide sequence ID" value="NC_003902.1"/>
</dbReference>
<dbReference type="RefSeq" id="WP_011037341.1">
    <property type="nucleotide sequence ID" value="NC_003902.1"/>
</dbReference>
<dbReference type="SMR" id="Q8P8P4"/>
<dbReference type="STRING" id="190485.XCC2195"/>
<dbReference type="EnsemblBacteria" id="AAM41475">
    <property type="protein sequence ID" value="AAM41475"/>
    <property type="gene ID" value="XCC2195"/>
</dbReference>
<dbReference type="KEGG" id="xcc:XCC2195"/>
<dbReference type="PATRIC" id="fig|190485.4.peg.2344"/>
<dbReference type="eggNOG" id="COG0283">
    <property type="taxonomic scope" value="Bacteria"/>
</dbReference>
<dbReference type="HOGENOM" id="CLU_079959_2_0_6"/>
<dbReference type="OrthoDB" id="9807434at2"/>
<dbReference type="Proteomes" id="UP000001010">
    <property type="component" value="Chromosome"/>
</dbReference>
<dbReference type="GO" id="GO:0005829">
    <property type="term" value="C:cytosol"/>
    <property type="evidence" value="ECO:0000318"/>
    <property type="project" value="GO_Central"/>
</dbReference>
<dbReference type="GO" id="GO:0004127">
    <property type="term" value="F:(d)CMP kinase activity"/>
    <property type="evidence" value="ECO:0000318"/>
    <property type="project" value="GO_Central"/>
</dbReference>
<dbReference type="GO" id="GO:0005524">
    <property type="term" value="F:ATP binding"/>
    <property type="evidence" value="ECO:0007669"/>
    <property type="project" value="UniProtKB-UniRule"/>
</dbReference>
<dbReference type="GO" id="GO:0036430">
    <property type="term" value="F:CMP kinase activity"/>
    <property type="evidence" value="ECO:0007669"/>
    <property type="project" value="RHEA"/>
</dbReference>
<dbReference type="GO" id="GO:0036431">
    <property type="term" value="F:dCMP kinase activity"/>
    <property type="evidence" value="ECO:0007669"/>
    <property type="project" value="RHEA"/>
</dbReference>
<dbReference type="GO" id="GO:0015949">
    <property type="term" value="P:nucleobase-containing small molecule interconversion"/>
    <property type="evidence" value="ECO:0000318"/>
    <property type="project" value="GO_Central"/>
</dbReference>
<dbReference type="GO" id="GO:0006220">
    <property type="term" value="P:pyrimidine nucleotide metabolic process"/>
    <property type="evidence" value="ECO:0007669"/>
    <property type="project" value="UniProtKB-UniRule"/>
</dbReference>
<dbReference type="CDD" id="cd02020">
    <property type="entry name" value="CMPK"/>
    <property type="match status" value="1"/>
</dbReference>
<dbReference type="FunFam" id="3.40.50.300:FF:000262">
    <property type="entry name" value="Cytidylate kinase"/>
    <property type="match status" value="1"/>
</dbReference>
<dbReference type="Gene3D" id="3.40.50.300">
    <property type="entry name" value="P-loop containing nucleotide triphosphate hydrolases"/>
    <property type="match status" value="1"/>
</dbReference>
<dbReference type="HAMAP" id="MF_00238">
    <property type="entry name" value="Cytidyl_kinase_type1"/>
    <property type="match status" value="1"/>
</dbReference>
<dbReference type="InterPro" id="IPR003136">
    <property type="entry name" value="Cytidylate_kin"/>
</dbReference>
<dbReference type="InterPro" id="IPR011994">
    <property type="entry name" value="Cytidylate_kinase_dom"/>
</dbReference>
<dbReference type="InterPro" id="IPR027417">
    <property type="entry name" value="P-loop_NTPase"/>
</dbReference>
<dbReference type="NCBIfam" id="TIGR00017">
    <property type="entry name" value="cmk"/>
    <property type="match status" value="1"/>
</dbReference>
<dbReference type="Pfam" id="PF02224">
    <property type="entry name" value="Cytidylate_kin"/>
    <property type="match status" value="1"/>
</dbReference>
<dbReference type="SUPFAM" id="SSF52540">
    <property type="entry name" value="P-loop containing nucleoside triphosphate hydrolases"/>
    <property type="match status" value="1"/>
</dbReference>
<organism>
    <name type="scientific">Xanthomonas campestris pv. campestris (strain ATCC 33913 / DSM 3586 / NCPPB 528 / LMG 568 / P 25)</name>
    <dbReference type="NCBI Taxonomy" id="190485"/>
    <lineage>
        <taxon>Bacteria</taxon>
        <taxon>Pseudomonadati</taxon>
        <taxon>Pseudomonadota</taxon>
        <taxon>Gammaproteobacteria</taxon>
        <taxon>Lysobacterales</taxon>
        <taxon>Lysobacteraceae</taxon>
        <taxon>Xanthomonas</taxon>
    </lineage>
</organism>
<comment type="catalytic activity">
    <reaction evidence="1">
        <text>CMP + ATP = CDP + ADP</text>
        <dbReference type="Rhea" id="RHEA:11600"/>
        <dbReference type="ChEBI" id="CHEBI:30616"/>
        <dbReference type="ChEBI" id="CHEBI:58069"/>
        <dbReference type="ChEBI" id="CHEBI:60377"/>
        <dbReference type="ChEBI" id="CHEBI:456216"/>
        <dbReference type="EC" id="2.7.4.25"/>
    </reaction>
</comment>
<comment type="catalytic activity">
    <reaction evidence="1">
        <text>dCMP + ATP = dCDP + ADP</text>
        <dbReference type="Rhea" id="RHEA:25094"/>
        <dbReference type="ChEBI" id="CHEBI:30616"/>
        <dbReference type="ChEBI" id="CHEBI:57566"/>
        <dbReference type="ChEBI" id="CHEBI:58593"/>
        <dbReference type="ChEBI" id="CHEBI:456216"/>
        <dbReference type="EC" id="2.7.4.25"/>
    </reaction>
</comment>
<comment type="subcellular location">
    <subcellularLocation>
        <location evidence="1">Cytoplasm</location>
    </subcellularLocation>
</comment>
<comment type="similarity">
    <text evidence="1">Belongs to the cytidylate kinase family. Type 1 subfamily.</text>
</comment>
<keyword id="KW-0067">ATP-binding</keyword>
<keyword id="KW-0963">Cytoplasm</keyword>
<keyword id="KW-0418">Kinase</keyword>
<keyword id="KW-0547">Nucleotide-binding</keyword>
<keyword id="KW-1185">Reference proteome</keyword>
<keyword id="KW-0808">Transferase</keyword>